<organism>
    <name type="scientific">Rattus norvegicus</name>
    <name type="common">Rat</name>
    <dbReference type="NCBI Taxonomy" id="10116"/>
    <lineage>
        <taxon>Eukaryota</taxon>
        <taxon>Metazoa</taxon>
        <taxon>Chordata</taxon>
        <taxon>Craniata</taxon>
        <taxon>Vertebrata</taxon>
        <taxon>Euteleostomi</taxon>
        <taxon>Mammalia</taxon>
        <taxon>Eutheria</taxon>
        <taxon>Euarchontoglires</taxon>
        <taxon>Glires</taxon>
        <taxon>Rodentia</taxon>
        <taxon>Myomorpha</taxon>
        <taxon>Muroidea</taxon>
        <taxon>Muridae</taxon>
        <taxon>Murinae</taxon>
        <taxon>Rattus</taxon>
    </lineage>
</organism>
<dbReference type="EC" id="2.7.1.11" evidence="4"/>
<dbReference type="EMBL" id="BC088847">
    <property type="protein sequence ID" value="AAH88847.1"/>
    <property type="molecule type" value="mRNA"/>
</dbReference>
<dbReference type="EMBL" id="L25387">
    <property type="protein sequence ID" value="AAA17757.1"/>
    <property type="status" value="ALT_FRAME"/>
    <property type="molecule type" value="mRNA"/>
</dbReference>
<dbReference type="PIR" id="A53047">
    <property type="entry name" value="A53047"/>
</dbReference>
<dbReference type="RefSeq" id="NP_996729.1">
    <property type="nucleotide sequence ID" value="NM_206847.2"/>
</dbReference>
<dbReference type="SMR" id="P47860"/>
<dbReference type="BioGRID" id="248822">
    <property type="interactions" value="4"/>
</dbReference>
<dbReference type="ComplexPortal" id="CPX-2054">
    <property type="entry name" value="6-phosphofructokinase, P4 homotetramer"/>
</dbReference>
<dbReference type="FunCoup" id="P47860">
    <property type="interactions" value="1679"/>
</dbReference>
<dbReference type="IntAct" id="P47860">
    <property type="interactions" value="5"/>
</dbReference>
<dbReference type="MINT" id="P47860"/>
<dbReference type="STRING" id="10116.ENSRNOP00000023252"/>
<dbReference type="GlyCosmos" id="P47860">
    <property type="glycosylation" value="1 site, No reported glycans"/>
</dbReference>
<dbReference type="GlyGen" id="P47860">
    <property type="glycosylation" value="2 sites, 1 O-linked glycan (1 site)"/>
</dbReference>
<dbReference type="iPTMnet" id="P47860"/>
<dbReference type="PhosphoSitePlus" id="P47860"/>
<dbReference type="jPOST" id="P47860"/>
<dbReference type="PaxDb" id="10116-ENSRNOP00000023252"/>
<dbReference type="Ensembl" id="ENSRNOT00000023252.8">
    <property type="protein sequence ID" value="ENSRNOP00000023252.8"/>
    <property type="gene ID" value="ENSRNOG00000017163.8"/>
</dbReference>
<dbReference type="GeneID" id="60416"/>
<dbReference type="KEGG" id="rno:60416"/>
<dbReference type="UCSC" id="RGD:61893">
    <property type="organism name" value="rat"/>
</dbReference>
<dbReference type="AGR" id="RGD:61893"/>
<dbReference type="CTD" id="5214"/>
<dbReference type="RGD" id="61893">
    <property type="gene designation" value="Pfkp"/>
</dbReference>
<dbReference type="eggNOG" id="KOG2440">
    <property type="taxonomic scope" value="Eukaryota"/>
</dbReference>
<dbReference type="GeneTree" id="ENSGT00940000155002"/>
<dbReference type="InParanoid" id="P47860"/>
<dbReference type="OrthoDB" id="537915at2759"/>
<dbReference type="PhylomeDB" id="P47860"/>
<dbReference type="Reactome" id="R-RNO-70171">
    <property type="pathway name" value="Glycolysis"/>
</dbReference>
<dbReference type="SABIO-RK" id="P47860"/>
<dbReference type="UniPathway" id="UPA00109">
    <property type="reaction ID" value="UER00182"/>
</dbReference>
<dbReference type="PRO" id="PR:P47860"/>
<dbReference type="Proteomes" id="UP000002494">
    <property type="component" value="Chromosome 17"/>
</dbReference>
<dbReference type="GO" id="GO:0005945">
    <property type="term" value="C:6-phosphofructokinase complex"/>
    <property type="evidence" value="ECO:0000318"/>
    <property type="project" value="GO_Central"/>
</dbReference>
<dbReference type="GO" id="GO:0005737">
    <property type="term" value="C:cytoplasm"/>
    <property type="evidence" value="ECO:0000266"/>
    <property type="project" value="RGD"/>
</dbReference>
<dbReference type="GO" id="GO:0005829">
    <property type="term" value="C:cytosol"/>
    <property type="evidence" value="ECO:0000266"/>
    <property type="project" value="RGD"/>
</dbReference>
<dbReference type="GO" id="GO:0016020">
    <property type="term" value="C:membrane"/>
    <property type="evidence" value="ECO:0000318"/>
    <property type="project" value="GO_Central"/>
</dbReference>
<dbReference type="GO" id="GO:0003872">
    <property type="term" value="F:6-phosphofructokinase activity"/>
    <property type="evidence" value="ECO:0000314"/>
    <property type="project" value="RGD"/>
</dbReference>
<dbReference type="GO" id="GO:0005524">
    <property type="term" value="F:ATP binding"/>
    <property type="evidence" value="ECO:0000314"/>
    <property type="project" value="RGD"/>
</dbReference>
<dbReference type="GO" id="GO:0070095">
    <property type="term" value="F:fructose-6-phosphate binding"/>
    <property type="evidence" value="ECO:0000314"/>
    <property type="project" value="RGD"/>
</dbReference>
<dbReference type="GO" id="GO:0042802">
    <property type="term" value="F:identical protein binding"/>
    <property type="evidence" value="ECO:0000353"/>
    <property type="project" value="RGD"/>
</dbReference>
<dbReference type="GO" id="GO:0046872">
    <property type="term" value="F:metal ion binding"/>
    <property type="evidence" value="ECO:0007669"/>
    <property type="project" value="UniProtKB-KW"/>
</dbReference>
<dbReference type="GO" id="GO:0044877">
    <property type="term" value="F:protein-containing complex binding"/>
    <property type="evidence" value="ECO:0000266"/>
    <property type="project" value="RGD"/>
</dbReference>
<dbReference type="GO" id="GO:0061621">
    <property type="term" value="P:canonical glycolysis"/>
    <property type="evidence" value="ECO:0000318"/>
    <property type="project" value="GO_Central"/>
</dbReference>
<dbReference type="GO" id="GO:1990830">
    <property type="term" value="P:cellular response to leukemia inhibitory factor"/>
    <property type="evidence" value="ECO:0000266"/>
    <property type="project" value="RGD"/>
</dbReference>
<dbReference type="GO" id="GO:0030388">
    <property type="term" value="P:fructose 1,6-bisphosphate metabolic process"/>
    <property type="evidence" value="ECO:0000314"/>
    <property type="project" value="RGD"/>
</dbReference>
<dbReference type="GO" id="GO:0006002">
    <property type="term" value="P:fructose 6-phosphate metabolic process"/>
    <property type="evidence" value="ECO:0000314"/>
    <property type="project" value="RGD"/>
</dbReference>
<dbReference type="GO" id="GO:0006096">
    <property type="term" value="P:glycolytic process"/>
    <property type="evidence" value="ECO:0000314"/>
    <property type="project" value="RGD"/>
</dbReference>
<dbReference type="CDD" id="cd00764">
    <property type="entry name" value="Eukaryotic_PFK"/>
    <property type="match status" value="1"/>
</dbReference>
<dbReference type="FunFam" id="3.40.50.460:FF:000001">
    <property type="entry name" value="ATP-dependent 6-phosphofructokinase"/>
    <property type="match status" value="1"/>
</dbReference>
<dbReference type="FunFam" id="3.40.50.460:FF:000003">
    <property type="entry name" value="ATP-dependent 6-phosphofructokinase"/>
    <property type="match status" value="1"/>
</dbReference>
<dbReference type="FunFam" id="3.40.50.450:FF:000043">
    <property type="entry name" value="ATP-dependent 6-phosphofructokinase, platelet type"/>
    <property type="match status" value="1"/>
</dbReference>
<dbReference type="FunFam" id="3.40.50.450:FF:000064">
    <property type="entry name" value="Phosphofructokinase, platelet b"/>
    <property type="match status" value="1"/>
</dbReference>
<dbReference type="Gene3D" id="3.40.50.450">
    <property type="match status" value="2"/>
</dbReference>
<dbReference type="Gene3D" id="3.40.50.460">
    <property type="entry name" value="Phosphofructokinase domain"/>
    <property type="match status" value="2"/>
</dbReference>
<dbReference type="HAMAP" id="MF_03184">
    <property type="entry name" value="Phosphofructokinase_I_E"/>
    <property type="match status" value="1"/>
</dbReference>
<dbReference type="InterPro" id="IPR009161">
    <property type="entry name" value="6-Pfructokinase_euk"/>
</dbReference>
<dbReference type="InterPro" id="IPR022953">
    <property type="entry name" value="ATP_PFK"/>
</dbReference>
<dbReference type="InterPro" id="IPR041914">
    <property type="entry name" value="PFK_vert-type"/>
</dbReference>
<dbReference type="InterPro" id="IPR015912">
    <property type="entry name" value="Phosphofructokinase_CS"/>
</dbReference>
<dbReference type="InterPro" id="IPR000023">
    <property type="entry name" value="Phosphofructokinase_dom"/>
</dbReference>
<dbReference type="InterPro" id="IPR035966">
    <property type="entry name" value="PKF_sf"/>
</dbReference>
<dbReference type="NCBIfam" id="TIGR02478">
    <property type="entry name" value="6PF1K_euk"/>
    <property type="match status" value="1"/>
</dbReference>
<dbReference type="PANTHER" id="PTHR13697:SF5">
    <property type="entry name" value="ATP-DEPENDENT 6-PHOSPHOFRUCTOKINASE, PLATELET TYPE"/>
    <property type="match status" value="1"/>
</dbReference>
<dbReference type="PANTHER" id="PTHR13697">
    <property type="entry name" value="PHOSPHOFRUCTOKINASE"/>
    <property type="match status" value="1"/>
</dbReference>
<dbReference type="Pfam" id="PF00365">
    <property type="entry name" value="PFK"/>
    <property type="match status" value="2"/>
</dbReference>
<dbReference type="PIRSF" id="PIRSF000533">
    <property type="entry name" value="ATP_PFK_euk"/>
    <property type="match status" value="1"/>
</dbReference>
<dbReference type="PRINTS" id="PR00476">
    <property type="entry name" value="PHFRCTKINASE"/>
</dbReference>
<dbReference type="SUPFAM" id="SSF53784">
    <property type="entry name" value="Phosphofructokinase"/>
    <property type="match status" value="2"/>
</dbReference>
<dbReference type="PROSITE" id="PS00433">
    <property type="entry name" value="PHOSPHOFRUCTOKINASE"/>
    <property type="match status" value="2"/>
</dbReference>
<feature type="chain" id="PRO_0000112027" description="ATP-dependent 6-phosphofructokinase, platelet type">
    <location>
        <begin position="1"/>
        <end position="788"/>
    </location>
</feature>
<feature type="region of interest" description="N-terminal catalytic PFK domain 1">
    <location>
        <begin position="1"/>
        <end position="399"/>
    </location>
</feature>
<feature type="region of interest" description="Interdomain linker">
    <location>
        <begin position="400"/>
        <end position="411"/>
    </location>
</feature>
<feature type="region of interest" description="C-terminal regulatory PFK domain 2">
    <location>
        <begin position="412"/>
        <end position="788"/>
    </location>
</feature>
<feature type="active site" description="Proton acceptor" evidence="4">
    <location>
        <position position="175"/>
    </location>
</feature>
<feature type="binding site" evidence="4">
    <location>
        <position position="34"/>
    </location>
    <ligand>
        <name>ATP</name>
        <dbReference type="ChEBI" id="CHEBI:30616"/>
    </ligand>
</feature>
<feature type="binding site" evidence="4">
    <location>
        <begin position="97"/>
        <end position="98"/>
    </location>
    <ligand>
        <name>ATP</name>
        <dbReference type="ChEBI" id="CHEBI:30616"/>
    </ligand>
</feature>
<feature type="binding site" evidence="4">
    <location>
        <begin position="127"/>
        <end position="130"/>
    </location>
    <ligand>
        <name>ATP</name>
        <dbReference type="ChEBI" id="CHEBI:30616"/>
    </ligand>
</feature>
<feature type="binding site" evidence="4">
    <location>
        <position position="128"/>
    </location>
    <ligand>
        <name>Mg(2+)</name>
        <dbReference type="ChEBI" id="CHEBI:18420"/>
        <note>catalytic</note>
    </ligand>
</feature>
<feature type="binding site" description="in other chain" evidence="4">
    <location>
        <begin position="173"/>
        <end position="175"/>
    </location>
    <ligand>
        <name>substrate</name>
        <note>ligand shared between dimeric partners</note>
    </ligand>
</feature>
<feature type="binding site" evidence="4">
    <location>
        <position position="210"/>
    </location>
    <ligand>
        <name>substrate</name>
        <note>ligand shared between dimeric partners</note>
    </ligand>
</feature>
<feature type="binding site" description="in other chain" evidence="4">
    <location>
        <begin position="217"/>
        <end position="219"/>
    </location>
    <ligand>
        <name>substrate</name>
        <note>ligand shared between dimeric partners</note>
    </ligand>
</feature>
<feature type="binding site" description="in other chain" evidence="4">
    <location>
        <position position="273"/>
    </location>
    <ligand>
        <name>substrate</name>
        <note>ligand shared between dimeric partners</note>
    </ligand>
</feature>
<feature type="binding site" evidence="4">
    <location>
        <position position="301"/>
    </location>
    <ligand>
        <name>substrate</name>
        <note>ligand shared between dimeric partners</note>
    </ligand>
</feature>
<feature type="binding site" description="in other chain" evidence="4">
    <location>
        <begin position="307"/>
        <end position="310"/>
    </location>
    <ligand>
        <name>substrate</name>
        <note>ligand shared between dimeric partners</note>
    </ligand>
</feature>
<feature type="binding site" description="in other chain" evidence="4">
    <location>
        <position position="481"/>
    </location>
    <ligand>
        <name>beta-D-fructose 2,6-bisphosphate</name>
        <dbReference type="ChEBI" id="CHEBI:58579"/>
        <note>allosteric activator; ligand shared between dimeric partners</note>
    </ligand>
</feature>
<feature type="binding site" description="in other chain" evidence="4">
    <location>
        <begin position="538"/>
        <end position="542"/>
    </location>
    <ligand>
        <name>beta-D-fructose 2,6-bisphosphate</name>
        <dbReference type="ChEBI" id="CHEBI:58579"/>
        <note>allosteric activator; ligand shared between dimeric partners</note>
    </ligand>
</feature>
<feature type="binding site" evidence="4">
    <location>
        <position position="576"/>
    </location>
    <ligand>
        <name>beta-D-fructose 2,6-bisphosphate</name>
        <dbReference type="ChEBI" id="CHEBI:58579"/>
        <note>allosteric activator; ligand shared between dimeric partners</note>
    </ligand>
</feature>
<feature type="binding site" description="in other chain" evidence="4">
    <location>
        <begin position="583"/>
        <end position="585"/>
    </location>
    <ligand>
        <name>beta-D-fructose 2,6-bisphosphate</name>
        <dbReference type="ChEBI" id="CHEBI:58579"/>
        <note>allosteric activator; ligand shared between dimeric partners</note>
    </ligand>
</feature>
<feature type="binding site" description="in other chain" evidence="4">
    <location>
        <position position="639"/>
    </location>
    <ligand>
        <name>beta-D-fructose 2,6-bisphosphate</name>
        <dbReference type="ChEBI" id="CHEBI:58579"/>
        <note>allosteric activator; ligand shared between dimeric partners</note>
    </ligand>
</feature>
<feature type="binding site" evidence="4">
    <location>
        <position position="665"/>
    </location>
    <ligand>
        <name>beta-D-fructose 2,6-bisphosphate</name>
        <dbReference type="ChEBI" id="CHEBI:58579"/>
        <note>allosteric activator; ligand shared between dimeric partners</note>
    </ligand>
</feature>
<feature type="binding site" description="in other chain" evidence="4">
    <location>
        <begin position="671"/>
        <end position="674"/>
    </location>
    <ligand>
        <name>beta-D-fructose 2,6-bisphosphate</name>
        <dbReference type="ChEBI" id="CHEBI:58579"/>
        <note>allosteric activator; ligand shared between dimeric partners</note>
    </ligand>
</feature>
<feature type="binding site" description="in other chain" evidence="4">
    <location>
        <position position="744"/>
    </location>
    <ligand>
        <name>beta-D-fructose 2,6-bisphosphate</name>
        <dbReference type="ChEBI" id="CHEBI:58579"/>
        <note>allosteric activator; ligand shared between dimeric partners</note>
    </ligand>
</feature>
<feature type="modified residue" description="N-acetylmethionine" evidence="3">
    <location>
        <position position="1"/>
    </location>
</feature>
<feature type="modified residue" description="Phosphoserine" evidence="6">
    <location>
        <position position="2"/>
    </location>
</feature>
<feature type="modified residue" description="Phosphoserine" evidence="3">
    <location>
        <position position="6"/>
    </location>
</feature>
<feature type="modified residue" description="Phosphoserine" evidence="2">
    <location>
        <position position="12"/>
    </location>
</feature>
<feature type="modified residue" description="Phosphoserine" evidence="3">
    <location>
        <position position="21"/>
    </location>
</feature>
<feature type="modified residue" description="Phosphoserine" evidence="6">
    <location>
        <position position="142"/>
    </location>
</feature>
<feature type="modified residue" description="Phosphoserine" evidence="6">
    <location>
        <position position="386"/>
    </location>
</feature>
<feature type="modified residue" description="N6-acetyllysine" evidence="3">
    <location>
        <position position="395"/>
    </location>
</feature>
<feature type="modified residue" description="N6-acetyllysine" evidence="3">
    <location>
        <position position="486"/>
    </location>
</feature>
<feature type="modified residue" description="Phosphotyrosine" evidence="3">
    <location>
        <position position="651"/>
    </location>
</feature>
<feature type="modified residue" description="N6-acetyllysine" evidence="3">
    <location>
        <position position="688"/>
    </location>
</feature>
<feature type="glycosylation site" description="O-linked (GlcNAc) serine" evidence="1">
    <location>
        <position position="540"/>
    </location>
</feature>
<feature type="sequence conflict" description="In Ref. 2; AAA17757." evidence="5" ref="2">
    <original>DA</original>
    <variation>ES</variation>
    <location>
        <begin position="35"/>
        <end position="36"/>
    </location>
</feature>
<feature type="sequence conflict" description="In Ref. 2; AAA17757." evidence="5" ref="2">
    <original>I</original>
    <variation>M</variation>
    <location>
        <position position="51"/>
    </location>
</feature>
<feature type="sequence conflict" description="In Ref. 2; AAA17757." evidence="5" ref="2">
    <original>K</original>
    <variation>Q</variation>
    <location>
        <position position="56"/>
    </location>
</feature>
<feature type="sequence conflict" description="In Ref. 2; AAA17757." evidence="5" ref="2">
    <original>A</original>
    <variation>T</variation>
    <location>
        <position position="111"/>
    </location>
</feature>
<feature type="sequence conflict" description="In Ref. 2; AAA17757." evidence="5" ref="2">
    <original>H</original>
    <variation>Y</variation>
    <location>
        <position position="220"/>
    </location>
</feature>
<feature type="sequence conflict" description="In Ref. 2; AAA17757." evidence="5" ref="2">
    <original>A</original>
    <variation>R</variation>
    <location>
        <position position="600"/>
    </location>
</feature>
<feature type="sequence conflict" description="In Ref. 2; AAA17757." evidence="5" ref="2">
    <original>R</original>
    <variation>L</variation>
    <location>
        <position position="755"/>
    </location>
</feature>
<feature type="sequence conflict" description="In Ref. 2; AAA17757." evidence="5" ref="2">
    <original>M</original>
    <variation>S</variation>
    <location>
        <position position="758"/>
    </location>
</feature>
<keyword id="KW-0007">Acetylation</keyword>
<keyword id="KW-0021">Allosteric enzyme</keyword>
<keyword id="KW-0067">ATP-binding</keyword>
<keyword id="KW-0963">Cytoplasm</keyword>
<keyword id="KW-0324">Glycolysis</keyword>
<keyword id="KW-0325">Glycoprotein</keyword>
<keyword id="KW-0418">Kinase</keyword>
<keyword id="KW-0460">Magnesium</keyword>
<keyword id="KW-0479">Metal-binding</keyword>
<keyword id="KW-0547">Nucleotide-binding</keyword>
<keyword id="KW-0597">Phosphoprotein</keyword>
<keyword id="KW-1185">Reference proteome</keyword>
<keyword id="KW-0808">Transferase</keyword>
<protein>
    <recommendedName>
        <fullName evidence="4">ATP-dependent 6-phosphofructokinase, platelet type</fullName>
        <shortName evidence="4">ATP-PFK</shortName>
        <shortName>PFK-P</shortName>
        <ecNumber evidence="4">2.7.1.11</ecNumber>
    </recommendedName>
    <alternativeName>
        <fullName>6-phosphofructokinase type C</fullName>
    </alternativeName>
    <alternativeName>
        <fullName>Phosphofructo-1-kinase isozyme C</fullName>
        <shortName>PFK-C</shortName>
    </alternativeName>
    <alternativeName>
        <fullName evidence="4">Phosphohexokinase</fullName>
    </alternativeName>
</protein>
<proteinExistence type="evidence at protein level"/>
<evidence type="ECO:0000250" key="1"/>
<evidence type="ECO:0000250" key="2">
    <source>
        <dbReference type="UniProtKB" id="P47859"/>
    </source>
</evidence>
<evidence type="ECO:0000250" key="3">
    <source>
        <dbReference type="UniProtKB" id="Q01813"/>
    </source>
</evidence>
<evidence type="ECO:0000255" key="4">
    <source>
        <dbReference type="HAMAP-Rule" id="MF_03184"/>
    </source>
</evidence>
<evidence type="ECO:0000305" key="5"/>
<evidence type="ECO:0007744" key="6">
    <source>
    </source>
</evidence>
<sequence length="788" mass="85720">MSDQDSSTSSTSFPKYLEHLSGDGKAIGVLTSGGDAQGMNAAVRAVVRMGIYTGAKVYFIYEGYQGMVDGGSNIVEAKWECVSSILQVGGTIIGSARCQAFRSREGRLKAACNLVRLGITNLCVIGGDGSLTGANLFRKEWSGLLEELAKNGEIDSDTVKKHAYLNVVGMVGSIDNDFCGTDMTIGTDSALHRIIEVVDAIMTTAQSHQRTFVLEVMGRHCGYLALVSALACGADWVFLPESPPEEGWEEEMCLKLSENRARKKRLNIIIVSEGAIDTQNKPITSEKIKELVVTNLGFDTRVTILGHVQRGGTPSAFDRILASRMGVEAVLALLEATPETPACVVSLRGNQAVRLPLMECVQMTQDVQKAMDERRFDEAVKLRGRSFEGNLNTYKRLAIKEPDDKIPKSNCNVAIINVGAPAAGMNAAVRSAVRVGIAEGHKMFAIYDGFDGLANGQIKEIGWGDVGGWTGQGGSILGTKRTLPGKYLEKIAEQMHSKNINALLIIGGFEAYLGLLELAAARNKHEAFCVPMVMVPATVSNNVPGSDFSIGADTALNTITDTCDRIKQSASGTKRRVFIIETMGGYCGYLANMGGLAAGADAAYIFEEQFDIRDLQSNVMHLTEKMKTSIQRGLVLRNENCSVNYTTDFIYQLYSEEGKGVFDCRKNVLGHMQQGGAPSPFDRNFGTKISAKAMEWISAKLKGSHGTGKKFVSDDSICVLGIQKRDLLFKPVAELRKATDFEHRIPKQQWWLKLRPIMKILAKYEASYDMSDVGKLEPVHNHGELSAI</sequence>
<accession>P47860</accession>
<accession>Q5HZX8</accession>
<comment type="function">
    <text evidence="4">Catalyzes the phosphorylation of D-fructose 6-phosphate to fructose 1,6-bisphosphate by ATP, the first committing step of glycolysis.</text>
</comment>
<comment type="catalytic activity">
    <reaction evidence="4">
        <text>beta-D-fructose 6-phosphate + ATP = beta-D-fructose 1,6-bisphosphate + ADP + H(+)</text>
        <dbReference type="Rhea" id="RHEA:16109"/>
        <dbReference type="ChEBI" id="CHEBI:15378"/>
        <dbReference type="ChEBI" id="CHEBI:30616"/>
        <dbReference type="ChEBI" id="CHEBI:32966"/>
        <dbReference type="ChEBI" id="CHEBI:57634"/>
        <dbReference type="ChEBI" id="CHEBI:456216"/>
        <dbReference type="EC" id="2.7.1.11"/>
    </reaction>
</comment>
<comment type="cofactor">
    <cofactor>
        <name>Mg(2+)</name>
        <dbReference type="ChEBI" id="CHEBI:18420"/>
    </cofactor>
</comment>
<comment type="activity regulation">
    <text evidence="4">Allosterically activated by ADP, AMP, or fructose 2,6-bisphosphate, and allosterically inhibited by ATP or citrate.</text>
</comment>
<comment type="pathway">
    <text evidence="4">Carbohydrate degradation; glycolysis; D-glyceraldehyde 3-phosphate and glycerone phosphate from D-glucose: step 3/4.</text>
</comment>
<comment type="subunit">
    <text evidence="4 5">Homo- and heterotetramers (By similarity). Phosphofructokinase (PFK) enzyme functions as a tetramer composed of different combinations of 3 types of subunits, called PFKM (M), PFKL (L) and PFKP (P). The composition of the PFK tetramer differs according to the tissue type it is present in. The kinetic and regulatory properties of the tetrameric enzyme are dependent on the subunit composition, hence can vary across tissues (Probable). Interacts with ATG4B; promoting phosphorylation of ATG4B.</text>
</comment>
<comment type="subcellular location">
    <subcellularLocation>
        <location evidence="4">Cytoplasm</location>
    </subcellularLocation>
</comment>
<comment type="tissue specificity">
    <text>Expressed at high level in neuroendocrine tissues.</text>
</comment>
<comment type="PTM">
    <text evidence="1">GlcNAcylation decreases enzyme activity.</text>
</comment>
<comment type="PTM">
    <text evidence="3">Phosphorylation at Ser-386 promotes interaction with ATG4B.</text>
</comment>
<comment type="similarity">
    <text evidence="4">Belongs to the phosphofructokinase type A (PFKA) family. ATP-dependent PFK group I subfamily. Eukaryotic two domain clade 'E' sub-subfamily.</text>
</comment>
<comment type="sequence caution" evidence="5">
    <conflict type="frameshift">
        <sequence resource="EMBL-CDS" id="AAA17757"/>
    </conflict>
</comment>
<name>PFKAP_RAT</name>
<gene>
    <name type="primary">Pfkp</name>
    <name type="synonym">Pfkc</name>
</gene>
<reference key="1">
    <citation type="journal article" date="2004" name="Genome Res.">
        <title>The status, quality, and expansion of the NIH full-length cDNA project: the Mammalian Gene Collection (MGC).</title>
        <authorList>
            <consortium name="The MGC Project Team"/>
        </authorList>
    </citation>
    <scope>NUCLEOTIDE SEQUENCE [LARGE SCALE MRNA]</scope>
    <source>
        <tissue>Brain</tissue>
    </source>
</reference>
<reference key="2">
    <citation type="journal article" date="1994" name="J. Biol. Chem.">
        <title>Structure, distribution, and functional expression of the phosphofructokinase C isozyme.</title>
        <authorList>
            <person name="Gekakis N."/>
            <person name="Johnson R.C."/>
            <person name="Jerkins A."/>
            <person name="Mains R.E."/>
            <person name="Sul H.S."/>
        </authorList>
    </citation>
    <scope>NUCLEOTIDE SEQUENCE [MRNA] OF 3-788</scope>
    <source>
        <tissue>Hypothalamus</tissue>
    </source>
</reference>
<reference key="3">
    <citation type="journal article" date="2012" name="Nat. Commun.">
        <title>Quantitative maps of protein phosphorylation sites across 14 different rat organs and tissues.</title>
        <authorList>
            <person name="Lundby A."/>
            <person name="Secher A."/>
            <person name="Lage K."/>
            <person name="Nordsborg N.B."/>
            <person name="Dmytriyev A."/>
            <person name="Lundby C."/>
            <person name="Olsen J.V."/>
        </authorList>
    </citation>
    <scope>PHOSPHORYLATION [LARGE SCALE ANALYSIS] AT SER-2; SER-142 AND SER-386</scope>
    <scope>IDENTIFICATION BY MASS SPECTROMETRY [LARGE SCALE ANALYSIS]</scope>
</reference>